<proteinExistence type="inferred from homology"/>
<evidence type="ECO:0000255" key="1">
    <source>
        <dbReference type="HAMAP-Rule" id="MF_00335"/>
    </source>
</evidence>
<evidence type="ECO:0000255" key="2">
    <source>
        <dbReference type="PROSITE-ProRule" id="PRU01175"/>
    </source>
</evidence>
<evidence type="ECO:0000256" key="3">
    <source>
        <dbReference type="SAM" id="MobiDB-lite"/>
    </source>
</evidence>
<keyword id="KW-1003">Cell membrane</keyword>
<keyword id="KW-0255">Endonuclease</keyword>
<keyword id="KW-0378">Hydrolase</keyword>
<keyword id="KW-0472">Membrane</keyword>
<keyword id="KW-0540">Nuclease</keyword>
<keyword id="KW-0694">RNA-binding</keyword>
<keyword id="KW-0812">Transmembrane</keyword>
<keyword id="KW-1133">Transmembrane helix</keyword>
<sequence length="535" mass="60414">MFNIILAMVCALIGLIIGYVAISMKMKSSKEAAELTLLNAEQDAVDLRGKAEIEAEHIRKAAERESKAHQKELLLEAKEEARKYREEIEKEFKSDRQELKQMEARLTDRASSLDRKDENLSNKEKMLDSKEQSLTDKSRHINEREQEIATLETKKVEELSRIAELSQEEAKDIILADTEKDLAHDIATRIKEAEREVKDRSNKIAKDLLAQAMQRLAGEYVTEQTITTVHLPDDNMKGRIIGREGRNIRTLESLTGIDVIIDDTPEVVVLSGFDPIRREIARMTLESLIQDGRIHPARIEELVEKNRLEMDQRIREYGEAAAYEIGAPNLHPDLIKIMGRLQFRTSYGQNVLRHSVEVGKLAGILAGELGENVDLARRAGFLHDMGKAIDREVEGSHVEIGMEFARKYKEHPIVVNTIASHHGDVEPDSVIAVIVAAADALSSARPGARNESMENYIKRLRDLEEIANGFEGVQNAFALQAGREIRIMVQPGKVSDDQVVIMSHKVREKIEQNLDYPGNIKVTVIREMRAVDFAK</sequence>
<organism>
    <name type="scientific">Streptococcus agalactiae serotype Ia (strain ATCC 27591 / A909 / CDC SS700)</name>
    <dbReference type="NCBI Taxonomy" id="205921"/>
    <lineage>
        <taxon>Bacteria</taxon>
        <taxon>Bacillati</taxon>
        <taxon>Bacillota</taxon>
        <taxon>Bacilli</taxon>
        <taxon>Lactobacillales</taxon>
        <taxon>Streptococcaceae</taxon>
        <taxon>Streptococcus</taxon>
    </lineage>
</organism>
<feature type="chain" id="PRO_0000344939" description="Ribonuclease Y">
    <location>
        <begin position="1"/>
        <end position="535"/>
    </location>
</feature>
<feature type="transmembrane region" description="Helical" evidence="1">
    <location>
        <begin position="4"/>
        <end position="24"/>
    </location>
</feature>
<feature type="domain" description="KH" evidence="1">
    <location>
        <begin position="225"/>
        <end position="285"/>
    </location>
</feature>
<feature type="domain" description="HD" evidence="2">
    <location>
        <begin position="351"/>
        <end position="444"/>
    </location>
</feature>
<feature type="region of interest" description="Disordered" evidence="3">
    <location>
        <begin position="107"/>
        <end position="145"/>
    </location>
</feature>
<dbReference type="EC" id="3.1.-.-" evidence="1"/>
<dbReference type="EMBL" id="CP000114">
    <property type="protein sequence ID" value="ABA45229.1"/>
    <property type="molecule type" value="Genomic_DNA"/>
</dbReference>
<dbReference type="RefSeq" id="WP_000481839.1">
    <property type="nucleotide sequence ID" value="NC_007432.1"/>
</dbReference>
<dbReference type="SMR" id="Q3K374"/>
<dbReference type="KEGG" id="sak:SAK_0377"/>
<dbReference type="HOGENOM" id="CLU_028328_1_0_9"/>
<dbReference type="GO" id="GO:0005886">
    <property type="term" value="C:plasma membrane"/>
    <property type="evidence" value="ECO:0007669"/>
    <property type="project" value="UniProtKB-SubCell"/>
</dbReference>
<dbReference type="GO" id="GO:0003723">
    <property type="term" value="F:RNA binding"/>
    <property type="evidence" value="ECO:0007669"/>
    <property type="project" value="UniProtKB-UniRule"/>
</dbReference>
<dbReference type="GO" id="GO:0004521">
    <property type="term" value="F:RNA endonuclease activity"/>
    <property type="evidence" value="ECO:0007669"/>
    <property type="project" value="UniProtKB-UniRule"/>
</dbReference>
<dbReference type="GO" id="GO:0006402">
    <property type="term" value="P:mRNA catabolic process"/>
    <property type="evidence" value="ECO:0007669"/>
    <property type="project" value="UniProtKB-UniRule"/>
</dbReference>
<dbReference type="CDD" id="cd00077">
    <property type="entry name" value="HDc"/>
    <property type="match status" value="1"/>
</dbReference>
<dbReference type="CDD" id="cd22431">
    <property type="entry name" value="KH-I_RNaseY"/>
    <property type="match status" value="1"/>
</dbReference>
<dbReference type="FunFam" id="1.10.3210.10:FF:000003">
    <property type="entry name" value="Ribonuclease Y"/>
    <property type="match status" value="1"/>
</dbReference>
<dbReference type="Gene3D" id="1.10.3210.10">
    <property type="entry name" value="Hypothetical protein af1432"/>
    <property type="match status" value="1"/>
</dbReference>
<dbReference type="Gene3D" id="3.30.1370.10">
    <property type="entry name" value="K Homology domain, type 1"/>
    <property type="match status" value="1"/>
</dbReference>
<dbReference type="HAMAP" id="MF_00335">
    <property type="entry name" value="RNase_Y"/>
    <property type="match status" value="1"/>
</dbReference>
<dbReference type="InterPro" id="IPR003607">
    <property type="entry name" value="HD/PDEase_dom"/>
</dbReference>
<dbReference type="InterPro" id="IPR006674">
    <property type="entry name" value="HD_domain"/>
</dbReference>
<dbReference type="InterPro" id="IPR006675">
    <property type="entry name" value="HDIG_dom"/>
</dbReference>
<dbReference type="InterPro" id="IPR004087">
    <property type="entry name" value="KH_dom"/>
</dbReference>
<dbReference type="InterPro" id="IPR004088">
    <property type="entry name" value="KH_dom_type_1"/>
</dbReference>
<dbReference type="InterPro" id="IPR036612">
    <property type="entry name" value="KH_dom_type_1_sf"/>
</dbReference>
<dbReference type="InterPro" id="IPR017705">
    <property type="entry name" value="Ribonuclease_Y"/>
</dbReference>
<dbReference type="InterPro" id="IPR022711">
    <property type="entry name" value="RNase_Y_N"/>
</dbReference>
<dbReference type="NCBIfam" id="TIGR00277">
    <property type="entry name" value="HDIG"/>
    <property type="match status" value="1"/>
</dbReference>
<dbReference type="NCBIfam" id="NF000997">
    <property type="entry name" value="PRK00106.1"/>
    <property type="match status" value="1"/>
</dbReference>
<dbReference type="NCBIfam" id="TIGR03319">
    <property type="entry name" value="RNase_Y"/>
    <property type="match status" value="1"/>
</dbReference>
<dbReference type="PANTHER" id="PTHR12826">
    <property type="entry name" value="RIBONUCLEASE Y"/>
    <property type="match status" value="1"/>
</dbReference>
<dbReference type="PANTHER" id="PTHR12826:SF15">
    <property type="entry name" value="RIBONUCLEASE Y"/>
    <property type="match status" value="1"/>
</dbReference>
<dbReference type="Pfam" id="PF01966">
    <property type="entry name" value="HD"/>
    <property type="match status" value="1"/>
</dbReference>
<dbReference type="Pfam" id="PF00013">
    <property type="entry name" value="KH_1"/>
    <property type="match status" value="1"/>
</dbReference>
<dbReference type="Pfam" id="PF12072">
    <property type="entry name" value="RNase_Y_N"/>
    <property type="match status" value="1"/>
</dbReference>
<dbReference type="SMART" id="SM00471">
    <property type="entry name" value="HDc"/>
    <property type="match status" value="1"/>
</dbReference>
<dbReference type="SMART" id="SM00322">
    <property type="entry name" value="KH"/>
    <property type="match status" value="1"/>
</dbReference>
<dbReference type="SUPFAM" id="SSF54791">
    <property type="entry name" value="Eukaryotic type KH-domain (KH-domain type I)"/>
    <property type="match status" value="1"/>
</dbReference>
<dbReference type="SUPFAM" id="SSF109604">
    <property type="entry name" value="HD-domain/PDEase-like"/>
    <property type="match status" value="1"/>
</dbReference>
<dbReference type="PROSITE" id="PS51831">
    <property type="entry name" value="HD"/>
    <property type="match status" value="1"/>
</dbReference>
<dbReference type="PROSITE" id="PS50084">
    <property type="entry name" value="KH_TYPE_1"/>
    <property type="match status" value="1"/>
</dbReference>
<reference key="1">
    <citation type="journal article" date="2005" name="Proc. Natl. Acad. Sci. U.S.A.">
        <title>Genome analysis of multiple pathogenic isolates of Streptococcus agalactiae: implications for the microbial 'pan-genome'.</title>
        <authorList>
            <person name="Tettelin H."/>
            <person name="Masignani V."/>
            <person name="Cieslewicz M.J."/>
            <person name="Donati C."/>
            <person name="Medini D."/>
            <person name="Ward N.L."/>
            <person name="Angiuoli S.V."/>
            <person name="Crabtree J."/>
            <person name="Jones A.L."/>
            <person name="Durkin A.S."/>
            <person name="DeBoy R.T."/>
            <person name="Davidsen T.M."/>
            <person name="Mora M."/>
            <person name="Scarselli M."/>
            <person name="Margarit y Ros I."/>
            <person name="Peterson J.D."/>
            <person name="Hauser C.R."/>
            <person name="Sundaram J.P."/>
            <person name="Nelson W.C."/>
            <person name="Madupu R."/>
            <person name="Brinkac L.M."/>
            <person name="Dodson R.J."/>
            <person name="Rosovitz M.J."/>
            <person name="Sullivan S.A."/>
            <person name="Daugherty S.C."/>
            <person name="Haft D.H."/>
            <person name="Selengut J."/>
            <person name="Gwinn M.L."/>
            <person name="Zhou L."/>
            <person name="Zafar N."/>
            <person name="Khouri H."/>
            <person name="Radune D."/>
            <person name="Dimitrov G."/>
            <person name="Watkins K."/>
            <person name="O'Connor K.J."/>
            <person name="Smith S."/>
            <person name="Utterback T.R."/>
            <person name="White O."/>
            <person name="Rubens C.E."/>
            <person name="Grandi G."/>
            <person name="Madoff L.C."/>
            <person name="Kasper D.L."/>
            <person name="Telford J.L."/>
            <person name="Wessels M.R."/>
            <person name="Rappuoli R."/>
            <person name="Fraser C.M."/>
        </authorList>
    </citation>
    <scope>NUCLEOTIDE SEQUENCE [LARGE SCALE GENOMIC DNA]</scope>
    <source>
        <strain>ATCC 27591 / A909 / CDC SS700</strain>
    </source>
</reference>
<name>RNY_STRA1</name>
<protein>
    <recommendedName>
        <fullName evidence="1">Ribonuclease Y</fullName>
        <shortName evidence="1">RNase Y</shortName>
        <ecNumber evidence="1">3.1.-.-</ecNumber>
    </recommendedName>
</protein>
<gene>
    <name evidence="1" type="primary">rny</name>
    <name type="ordered locus">SAK_0377</name>
</gene>
<accession>Q3K374</accession>
<comment type="function">
    <text evidence="1">Endoribonuclease that initiates mRNA decay.</text>
</comment>
<comment type="subcellular location">
    <subcellularLocation>
        <location evidence="1">Cell membrane</location>
        <topology evidence="1">Single-pass membrane protein</topology>
    </subcellularLocation>
</comment>
<comment type="similarity">
    <text evidence="1">Belongs to the RNase Y family.</text>
</comment>